<sequence length="169" mass="18801">MYTSGYAHRSSSFSSAASKIARVSTENTTAGLISEVVYREDQPMMTQLLLLPLLQQLGQQSRWQLWLTPQQKLSREWVQASGLPLTKVMQISQLSPCHTVESMVRALRTGNYSVVIGWLADDLTEEEHAELVDAANEGNAMGFIMRPVSASSHATRQLSGLKIHSNLYH</sequence>
<accession>B1X8R2</accession>
<gene>
    <name evidence="1" type="primary">sulA</name>
    <name type="ordered locus">ECDH10B_1028</name>
</gene>
<comment type="function">
    <text evidence="1">Component of the SOS system and an inhibitor of cell division. Accumulation of SulA causes rapid cessation of cell division and the appearance of long, non-septate filaments. In the presence of GTP, binds a polymerization-competent form of FtsZ in a 1:1 ratio, thus inhibiting FtsZ polymerization and therefore preventing it from participating in the assembly of the Z ring. This mechanism prevents the premature segregation of damaged DNA to daughter cells during cell division.</text>
</comment>
<comment type="subunit">
    <text evidence="1">Interacts with FtsZ.</text>
</comment>
<comment type="induction">
    <text evidence="1">By DNA damage, as part of the SOS response.</text>
</comment>
<comment type="PTM">
    <text evidence="1">Is rapidly cleaved and degraded by the Lon protease once DNA damage is repaired.</text>
</comment>
<comment type="similarity">
    <text evidence="1">Belongs to the SulA family.</text>
</comment>
<protein>
    <recommendedName>
        <fullName evidence="1">Cell division inhibitor SulA</fullName>
    </recommendedName>
</protein>
<dbReference type="EMBL" id="CP000948">
    <property type="protein sequence ID" value="ACB02158.1"/>
    <property type="molecule type" value="Genomic_DNA"/>
</dbReference>
<dbReference type="RefSeq" id="WP_000288710.1">
    <property type="nucleotide sequence ID" value="NC_010473.1"/>
</dbReference>
<dbReference type="SMR" id="B1X8R2"/>
<dbReference type="GeneID" id="93776456"/>
<dbReference type="KEGG" id="ecd:ECDH10B_1028"/>
<dbReference type="HOGENOM" id="CLU_118972_1_0_6"/>
<dbReference type="GO" id="GO:0000917">
    <property type="term" value="P:division septum assembly"/>
    <property type="evidence" value="ECO:0007669"/>
    <property type="project" value="UniProtKB-KW"/>
</dbReference>
<dbReference type="GO" id="GO:0006281">
    <property type="term" value="P:DNA repair"/>
    <property type="evidence" value="ECO:0007669"/>
    <property type="project" value="TreeGrafter"/>
</dbReference>
<dbReference type="GO" id="GO:0051782">
    <property type="term" value="P:negative regulation of cell division"/>
    <property type="evidence" value="ECO:0007669"/>
    <property type="project" value="UniProtKB-UniRule"/>
</dbReference>
<dbReference type="GO" id="GO:0009432">
    <property type="term" value="P:SOS response"/>
    <property type="evidence" value="ECO:0007669"/>
    <property type="project" value="UniProtKB-UniRule"/>
</dbReference>
<dbReference type="FunFam" id="3.40.50.300:FF:000417">
    <property type="entry name" value="Cell division inhibitor SulA"/>
    <property type="match status" value="1"/>
</dbReference>
<dbReference type="Gene3D" id="3.40.50.300">
    <property type="entry name" value="P-loop containing nucleotide triphosphate hydrolases"/>
    <property type="match status" value="1"/>
</dbReference>
<dbReference type="HAMAP" id="MF_01179">
    <property type="entry name" value="SulA"/>
    <property type="match status" value="1"/>
</dbReference>
<dbReference type="InterPro" id="IPR004596">
    <property type="entry name" value="Cell_div_suppressor_SulA"/>
</dbReference>
<dbReference type="InterPro" id="IPR027417">
    <property type="entry name" value="P-loop_NTPase"/>
</dbReference>
<dbReference type="InterPro" id="IPR050356">
    <property type="entry name" value="SulA_CellDiv_inhibitor"/>
</dbReference>
<dbReference type="InterPro" id="IPR047696">
    <property type="entry name" value="SulA_enterobact"/>
</dbReference>
<dbReference type="NCBIfam" id="NF007892">
    <property type="entry name" value="PRK10595.1"/>
    <property type="match status" value="1"/>
</dbReference>
<dbReference type="NCBIfam" id="TIGR00623">
    <property type="entry name" value="SOS_SulA_coli"/>
    <property type="match status" value="1"/>
</dbReference>
<dbReference type="PANTHER" id="PTHR35369">
    <property type="entry name" value="BLR3025 PROTEIN-RELATED"/>
    <property type="match status" value="1"/>
</dbReference>
<dbReference type="PANTHER" id="PTHR35369:SF4">
    <property type="entry name" value="CELL DIVISION INHIBITOR SULA"/>
    <property type="match status" value="1"/>
</dbReference>
<dbReference type="Pfam" id="PF03846">
    <property type="entry name" value="SulA"/>
    <property type="match status" value="1"/>
</dbReference>
<dbReference type="PIRSF" id="PIRSF003093">
    <property type="entry name" value="SulA"/>
    <property type="match status" value="1"/>
</dbReference>
<dbReference type="SUPFAM" id="SSF52540">
    <property type="entry name" value="P-loop containing nucleoside triphosphate hydrolases"/>
    <property type="match status" value="1"/>
</dbReference>
<organism>
    <name type="scientific">Escherichia coli (strain K12 / DH10B)</name>
    <dbReference type="NCBI Taxonomy" id="316385"/>
    <lineage>
        <taxon>Bacteria</taxon>
        <taxon>Pseudomonadati</taxon>
        <taxon>Pseudomonadota</taxon>
        <taxon>Gammaproteobacteria</taxon>
        <taxon>Enterobacterales</taxon>
        <taxon>Enterobacteriaceae</taxon>
        <taxon>Escherichia</taxon>
    </lineage>
</organism>
<evidence type="ECO:0000255" key="1">
    <source>
        <dbReference type="HAMAP-Rule" id="MF_01179"/>
    </source>
</evidence>
<feature type="chain" id="PRO_1000138159" description="Cell division inhibitor SulA">
    <location>
        <begin position="1"/>
        <end position="169"/>
    </location>
</feature>
<feature type="region of interest" description="FtsZ binding" evidence="1">
    <location>
        <begin position="106"/>
        <end position="112"/>
    </location>
</feature>
<feature type="region of interest" description="Lon protease binding" evidence="1">
    <location>
        <begin position="162"/>
        <end position="169"/>
    </location>
</feature>
<feature type="site" description="Essential for degradation by Lon protease" evidence="1">
    <location>
        <position position="169"/>
    </location>
</feature>
<reference key="1">
    <citation type="journal article" date="2008" name="J. Bacteriol.">
        <title>The complete genome sequence of Escherichia coli DH10B: insights into the biology of a laboratory workhorse.</title>
        <authorList>
            <person name="Durfee T."/>
            <person name="Nelson R."/>
            <person name="Baldwin S."/>
            <person name="Plunkett G. III"/>
            <person name="Burland V."/>
            <person name="Mau B."/>
            <person name="Petrosino J.F."/>
            <person name="Qin X."/>
            <person name="Muzny D.M."/>
            <person name="Ayele M."/>
            <person name="Gibbs R.A."/>
            <person name="Csorgo B."/>
            <person name="Posfai G."/>
            <person name="Weinstock G.M."/>
            <person name="Blattner F.R."/>
        </authorList>
    </citation>
    <scope>NUCLEOTIDE SEQUENCE [LARGE SCALE GENOMIC DNA]</scope>
    <source>
        <strain>K12 / DH10B</strain>
    </source>
</reference>
<keyword id="KW-0131">Cell cycle</keyword>
<keyword id="KW-0132">Cell division</keyword>
<keyword id="KW-0227">DNA damage</keyword>
<keyword id="KW-0717">Septation</keyword>
<keyword id="KW-0742">SOS response</keyword>
<name>SULA_ECODH</name>
<proteinExistence type="inferred from homology"/>